<organism>
    <name type="scientific">Rickettsia africae (strain ESF-5)</name>
    <dbReference type="NCBI Taxonomy" id="347255"/>
    <lineage>
        <taxon>Bacteria</taxon>
        <taxon>Pseudomonadati</taxon>
        <taxon>Pseudomonadota</taxon>
        <taxon>Alphaproteobacteria</taxon>
        <taxon>Rickettsiales</taxon>
        <taxon>Rickettsiaceae</taxon>
        <taxon>Rickettsieae</taxon>
        <taxon>Rickettsia</taxon>
        <taxon>spotted fever group</taxon>
    </lineage>
</organism>
<sequence length="159" mass="17981">MPELKIKTEKVEKQLTKEPLVLKTPKEKIDNLGKFYATGKRKNAIARVWLKVGKGKIVVNKKTIAQYFPSETYVKTILKPFVLTKTIDQYDIICTVRGGGISGQKGAILHGISKALDKSAPDFHAILRKGGLLTRDSRVVERKKYGQRKARKKTQFSKR</sequence>
<reference key="1">
    <citation type="journal article" date="2009" name="BMC Genomics">
        <title>Analysis of the Rickettsia africae genome reveals that virulence acquisition in Rickettsia species may be explained by genome reduction.</title>
        <authorList>
            <person name="Fournier P.-E."/>
            <person name="El Karkouri K."/>
            <person name="Leroy Q."/>
            <person name="Robert C."/>
            <person name="Giumelli B."/>
            <person name="Renesto P."/>
            <person name="Socolovschi C."/>
            <person name="Parola P."/>
            <person name="Audic S."/>
            <person name="Raoult D."/>
        </authorList>
    </citation>
    <scope>NUCLEOTIDE SEQUENCE [LARGE SCALE GENOMIC DNA]</scope>
    <source>
        <strain>ESF-5</strain>
    </source>
</reference>
<evidence type="ECO:0000255" key="1">
    <source>
        <dbReference type="HAMAP-Rule" id="MF_00532"/>
    </source>
</evidence>
<evidence type="ECO:0000305" key="2"/>
<proteinExistence type="inferred from homology"/>
<feature type="chain" id="PRO_1000211843" description="Small ribosomal subunit protein uS9">
    <location>
        <begin position="1"/>
        <end position="159"/>
    </location>
</feature>
<accession>C3PMT0</accession>
<keyword id="KW-0687">Ribonucleoprotein</keyword>
<keyword id="KW-0689">Ribosomal protein</keyword>
<protein>
    <recommendedName>
        <fullName evidence="1">Small ribosomal subunit protein uS9</fullName>
    </recommendedName>
    <alternativeName>
        <fullName evidence="2">30S ribosomal protein S9</fullName>
    </alternativeName>
</protein>
<comment type="similarity">
    <text evidence="1">Belongs to the universal ribosomal protein uS9 family.</text>
</comment>
<gene>
    <name evidence="1" type="primary">rpsI</name>
    <name type="ordered locus">RAF_ORF0294</name>
</gene>
<dbReference type="EMBL" id="CP001612">
    <property type="protein sequence ID" value="ACP53240.1"/>
    <property type="molecule type" value="Genomic_DNA"/>
</dbReference>
<dbReference type="RefSeq" id="WP_004996371.1">
    <property type="nucleotide sequence ID" value="NC_012633.1"/>
</dbReference>
<dbReference type="SMR" id="C3PMT0"/>
<dbReference type="GeneID" id="95362000"/>
<dbReference type="KEGG" id="raf:RAF_ORF0294"/>
<dbReference type="HOGENOM" id="CLU_046483_2_0_5"/>
<dbReference type="Proteomes" id="UP000002305">
    <property type="component" value="Chromosome"/>
</dbReference>
<dbReference type="GO" id="GO:0022627">
    <property type="term" value="C:cytosolic small ribosomal subunit"/>
    <property type="evidence" value="ECO:0007669"/>
    <property type="project" value="TreeGrafter"/>
</dbReference>
<dbReference type="GO" id="GO:0003723">
    <property type="term" value="F:RNA binding"/>
    <property type="evidence" value="ECO:0007669"/>
    <property type="project" value="TreeGrafter"/>
</dbReference>
<dbReference type="GO" id="GO:0003735">
    <property type="term" value="F:structural constituent of ribosome"/>
    <property type="evidence" value="ECO:0007669"/>
    <property type="project" value="InterPro"/>
</dbReference>
<dbReference type="GO" id="GO:0006412">
    <property type="term" value="P:translation"/>
    <property type="evidence" value="ECO:0007669"/>
    <property type="project" value="UniProtKB-UniRule"/>
</dbReference>
<dbReference type="FunFam" id="3.30.230.10:FF:000001">
    <property type="entry name" value="30S ribosomal protein S9"/>
    <property type="match status" value="1"/>
</dbReference>
<dbReference type="Gene3D" id="3.30.230.10">
    <property type="match status" value="1"/>
</dbReference>
<dbReference type="HAMAP" id="MF_00532_B">
    <property type="entry name" value="Ribosomal_uS9_B"/>
    <property type="match status" value="1"/>
</dbReference>
<dbReference type="InterPro" id="IPR020568">
    <property type="entry name" value="Ribosomal_Su5_D2-typ_SF"/>
</dbReference>
<dbReference type="InterPro" id="IPR000754">
    <property type="entry name" value="Ribosomal_uS9"/>
</dbReference>
<dbReference type="InterPro" id="IPR023035">
    <property type="entry name" value="Ribosomal_uS9_bac/plastid"/>
</dbReference>
<dbReference type="InterPro" id="IPR020574">
    <property type="entry name" value="Ribosomal_uS9_CS"/>
</dbReference>
<dbReference type="InterPro" id="IPR014721">
    <property type="entry name" value="Ribsml_uS5_D2-typ_fold_subgr"/>
</dbReference>
<dbReference type="NCBIfam" id="NF001099">
    <property type="entry name" value="PRK00132.1"/>
    <property type="match status" value="1"/>
</dbReference>
<dbReference type="PANTHER" id="PTHR21569">
    <property type="entry name" value="RIBOSOMAL PROTEIN S9"/>
    <property type="match status" value="1"/>
</dbReference>
<dbReference type="PANTHER" id="PTHR21569:SF1">
    <property type="entry name" value="SMALL RIBOSOMAL SUBUNIT PROTEIN US9M"/>
    <property type="match status" value="1"/>
</dbReference>
<dbReference type="Pfam" id="PF00380">
    <property type="entry name" value="Ribosomal_S9"/>
    <property type="match status" value="1"/>
</dbReference>
<dbReference type="SUPFAM" id="SSF54211">
    <property type="entry name" value="Ribosomal protein S5 domain 2-like"/>
    <property type="match status" value="1"/>
</dbReference>
<dbReference type="PROSITE" id="PS00360">
    <property type="entry name" value="RIBOSOMAL_S9"/>
    <property type="match status" value="1"/>
</dbReference>
<name>RS9_RICAE</name>